<sequence>MKINQPAVAGTLESGDVMIRIAPLDTQDIDLQINSSVEKQFGDAIRTTILDVLARYNVRGVQLNVDDKGALDCILRARLEALLARASGIPALPWEDCQ</sequence>
<reference key="1">
    <citation type="journal article" date="2005" name="Nucleic Acids Res.">
        <title>Genome dynamics and diversity of Shigella species, the etiologic agents of bacillary dysentery.</title>
        <authorList>
            <person name="Yang F."/>
            <person name="Yang J."/>
            <person name="Zhang X."/>
            <person name="Chen L."/>
            <person name="Jiang Y."/>
            <person name="Yan Y."/>
            <person name="Tang X."/>
            <person name="Wang J."/>
            <person name="Xiong Z."/>
            <person name="Dong J."/>
            <person name="Xue Y."/>
            <person name="Zhu Y."/>
            <person name="Xu X."/>
            <person name="Sun L."/>
            <person name="Chen S."/>
            <person name="Nie H."/>
            <person name="Peng J."/>
            <person name="Xu J."/>
            <person name="Wang Y."/>
            <person name="Yuan Z."/>
            <person name="Wen Y."/>
            <person name="Yao Z."/>
            <person name="Shen Y."/>
            <person name="Qiang B."/>
            <person name="Hou Y."/>
            <person name="Yu J."/>
            <person name="Jin Q."/>
        </authorList>
    </citation>
    <scope>NUCLEOTIDE SEQUENCE [LARGE SCALE GENOMIC DNA]</scope>
    <source>
        <strain>Ss046</strain>
    </source>
</reference>
<keyword id="KW-0963">Cytoplasm</keyword>
<keyword id="KW-0597">Phosphoprotein</keyword>
<keyword id="KW-1185">Reference proteome</keyword>
<gene>
    <name evidence="1" type="primary">citD</name>
    <name type="ordered locus">SSON_0569</name>
</gene>
<evidence type="ECO:0000255" key="1">
    <source>
        <dbReference type="HAMAP-Rule" id="MF_00805"/>
    </source>
</evidence>
<dbReference type="EMBL" id="CP000038">
    <property type="protein sequence ID" value="AAZ87336.1"/>
    <property type="molecule type" value="Genomic_DNA"/>
</dbReference>
<dbReference type="RefSeq" id="WP_000700703.1">
    <property type="nucleotide sequence ID" value="NC_007384.1"/>
</dbReference>
<dbReference type="SMR" id="Q3Z4H6"/>
<dbReference type="GeneID" id="93776868"/>
<dbReference type="KEGG" id="ssn:SSON_0569"/>
<dbReference type="HOGENOM" id="CLU_158489_0_0_6"/>
<dbReference type="Proteomes" id="UP000002529">
    <property type="component" value="Chromosome"/>
</dbReference>
<dbReference type="GO" id="GO:0005737">
    <property type="term" value="C:cytoplasm"/>
    <property type="evidence" value="ECO:0007669"/>
    <property type="project" value="UniProtKB-SubCell"/>
</dbReference>
<dbReference type="HAMAP" id="MF_00805">
    <property type="entry name" value="CitD"/>
    <property type="match status" value="1"/>
</dbReference>
<dbReference type="InterPro" id="IPR006495">
    <property type="entry name" value="CitD"/>
</dbReference>
<dbReference type="InterPro" id="IPR023439">
    <property type="entry name" value="Mal_deCO2ase/Cit_lyase_ACP"/>
</dbReference>
<dbReference type="NCBIfam" id="TIGR01608">
    <property type="entry name" value="citD"/>
    <property type="match status" value="1"/>
</dbReference>
<dbReference type="NCBIfam" id="NF009726">
    <property type="entry name" value="PRK13253.1"/>
    <property type="match status" value="1"/>
</dbReference>
<dbReference type="Pfam" id="PF06857">
    <property type="entry name" value="ACP"/>
    <property type="match status" value="1"/>
</dbReference>
<dbReference type="PIRSF" id="PIRSF002736">
    <property type="entry name" value="Citrt_lyas_gamma"/>
    <property type="match status" value="1"/>
</dbReference>
<proteinExistence type="inferred from homology"/>
<organism>
    <name type="scientific">Shigella sonnei (strain Ss046)</name>
    <dbReference type="NCBI Taxonomy" id="300269"/>
    <lineage>
        <taxon>Bacteria</taxon>
        <taxon>Pseudomonadati</taxon>
        <taxon>Pseudomonadota</taxon>
        <taxon>Gammaproteobacteria</taxon>
        <taxon>Enterobacterales</taxon>
        <taxon>Enterobacteriaceae</taxon>
        <taxon>Shigella</taxon>
    </lineage>
</organism>
<feature type="chain" id="PRO_1000047081" description="Citrate lyase acyl carrier protein">
    <location>
        <begin position="1"/>
        <end position="98"/>
    </location>
</feature>
<feature type="modified residue" description="O-(phosphoribosyl dephospho-coenzyme A)serine" evidence="1">
    <location>
        <position position="14"/>
    </location>
</feature>
<comment type="function">
    <text evidence="1">Covalent carrier of the coenzyme of citrate lyase.</text>
</comment>
<comment type="subunit">
    <text evidence="1">Oligomer with a subunit composition of (alpha,beta,gamma)6.</text>
</comment>
<comment type="subcellular location">
    <subcellularLocation>
        <location evidence="1">Cytoplasm</location>
    </subcellularLocation>
</comment>
<comment type="similarity">
    <text evidence="1">Belongs to the CitD family.</text>
</comment>
<name>CITD_SHISS</name>
<accession>Q3Z4H6</accession>
<protein>
    <recommendedName>
        <fullName evidence="1">Citrate lyase acyl carrier protein</fullName>
    </recommendedName>
    <alternativeName>
        <fullName evidence="1">Citrate lyase gamma chain</fullName>
    </alternativeName>
</protein>